<accession>Q2K425</accession>
<proteinExistence type="inferred from homology"/>
<sequence>MTNSGTASGVRVRIAPSPTGEPHVGTAYIALFNYLFAKKHGGEFILRIEDTDATRSTPEFETKVLDALKWCGLEWKEGPDIGGPYGPYRQSDRKPMYQPYAQELLDKGHAFRCFCTPARLEQMRETQRAAGKPPKYDGLCLNLTAEEVTARMAAGETTVIRMKIPAEGSCDFTDGVYGDVSIPWDSVDMQVLIKADGMPTYHMANVIDDHLMKITHVARGEEWLASVPKHILLYRYFGWEQPVFMHLSLMRNADKSKLSKRKNPTSISYYSALGYIPEALMNFLGLFFMQIAEGEELLTMEELSEKFDPDNLSKAGAIFDIQKLDWLNGRWIREKLSEEEFRARVLTWAMENDRLMAGLRLSQTRISKLGELPDLASFLLKSDLGLQPSDFAKIKSPPEEILEILNTVQPDLEKILEWNVETIEAELRAVADRLGKKLKVVVAPLFVAVSGSSRSLPLFDSMALLGRSVVRQRLKLAAQAVAALVGSK</sequence>
<evidence type="ECO:0000255" key="1">
    <source>
        <dbReference type="HAMAP-Rule" id="MF_00022"/>
    </source>
</evidence>
<keyword id="KW-0030">Aminoacyl-tRNA synthetase</keyword>
<keyword id="KW-0067">ATP-binding</keyword>
<keyword id="KW-0963">Cytoplasm</keyword>
<keyword id="KW-0436">Ligase</keyword>
<keyword id="KW-0547">Nucleotide-binding</keyword>
<keyword id="KW-0648">Protein biosynthesis</keyword>
<keyword id="KW-1185">Reference proteome</keyword>
<dbReference type="EC" id="6.1.1.17" evidence="1"/>
<dbReference type="EMBL" id="CP000133">
    <property type="protein sequence ID" value="ABC92411.1"/>
    <property type="molecule type" value="Genomic_DNA"/>
</dbReference>
<dbReference type="RefSeq" id="WP_011426869.1">
    <property type="nucleotide sequence ID" value="NC_007761.1"/>
</dbReference>
<dbReference type="SMR" id="Q2K425"/>
<dbReference type="KEGG" id="ret:RHE_CH03656"/>
<dbReference type="eggNOG" id="COG0008">
    <property type="taxonomic scope" value="Bacteria"/>
</dbReference>
<dbReference type="HOGENOM" id="CLU_015768_6_3_5"/>
<dbReference type="OrthoDB" id="9807503at2"/>
<dbReference type="Proteomes" id="UP000001936">
    <property type="component" value="Chromosome"/>
</dbReference>
<dbReference type="GO" id="GO:0005829">
    <property type="term" value="C:cytosol"/>
    <property type="evidence" value="ECO:0007669"/>
    <property type="project" value="TreeGrafter"/>
</dbReference>
<dbReference type="GO" id="GO:0005524">
    <property type="term" value="F:ATP binding"/>
    <property type="evidence" value="ECO:0007669"/>
    <property type="project" value="UniProtKB-UniRule"/>
</dbReference>
<dbReference type="GO" id="GO:0004818">
    <property type="term" value="F:glutamate-tRNA ligase activity"/>
    <property type="evidence" value="ECO:0007669"/>
    <property type="project" value="UniProtKB-UniRule"/>
</dbReference>
<dbReference type="GO" id="GO:0000049">
    <property type="term" value="F:tRNA binding"/>
    <property type="evidence" value="ECO:0007669"/>
    <property type="project" value="InterPro"/>
</dbReference>
<dbReference type="GO" id="GO:0008270">
    <property type="term" value="F:zinc ion binding"/>
    <property type="evidence" value="ECO:0007669"/>
    <property type="project" value="InterPro"/>
</dbReference>
<dbReference type="GO" id="GO:0006424">
    <property type="term" value="P:glutamyl-tRNA aminoacylation"/>
    <property type="evidence" value="ECO:0007669"/>
    <property type="project" value="UniProtKB-UniRule"/>
</dbReference>
<dbReference type="CDD" id="cd00808">
    <property type="entry name" value="GluRS_core"/>
    <property type="match status" value="1"/>
</dbReference>
<dbReference type="FunFam" id="3.40.50.620:FF:000045">
    <property type="entry name" value="Glutamate--tRNA ligase, mitochondrial"/>
    <property type="match status" value="1"/>
</dbReference>
<dbReference type="Gene3D" id="1.10.10.350">
    <property type="match status" value="1"/>
</dbReference>
<dbReference type="Gene3D" id="3.40.50.620">
    <property type="entry name" value="HUPs"/>
    <property type="match status" value="1"/>
</dbReference>
<dbReference type="HAMAP" id="MF_00022">
    <property type="entry name" value="Glu_tRNA_synth_type1"/>
    <property type="match status" value="1"/>
</dbReference>
<dbReference type="InterPro" id="IPR045462">
    <property type="entry name" value="aa-tRNA-synth_I_cd-bd"/>
</dbReference>
<dbReference type="InterPro" id="IPR020751">
    <property type="entry name" value="aa-tRNA-synth_I_codon-bd_sub2"/>
</dbReference>
<dbReference type="InterPro" id="IPR001412">
    <property type="entry name" value="aa-tRNA-synth_I_CS"/>
</dbReference>
<dbReference type="InterPro" id="IPR008925">
    <property type="entry name" value="aa_tRNA-synth_I_cd-bd_sf"/>
</dbReference>
<dbReference type="InterPro" id="IPR004527">
    <property type="entry name" value="Glu-tRNA-ligase_bac/mito"/>
</dbReference>
<dbReference type="InterPro" id="IPR000924">
    <property type="entry name" value="Glu/Gln-tRNA-synth"/>
</dbReference>
<dbReference type="InterPro" id="IPR020058">
    <property type="entry name" value="Glu/Gln-tRNA-synth_Ib_cat-dom"/>
</dbReference>
<dbReference type="InterPro" id="IPR049940">
    <property type="entry name" value="GluQ/Sye"/>
</dbReference>
<dbReference type="InterPro" id="IPR033910">
    <property type="entry name" value="GluRS_core"/>
</dbReference>
<dbReference type="InterPro" id="IPR014729">
    <property type="entry name" value="Rossmann-like_a/b/a_fold"/>
</dbReference>
<dbReference type="NCBIfam" id="TIGR00464">
    <property type="entry name" value="gltX_bact"/>
    <property type="match status" value="1"/>
</dbReference>
<dbReference type="PANTHER" id="PTHR43311">
    <property type="entry name" value="GLUTAMATE--TRNA LIGASE"/>
    <property type="match status" value="1"/>
</dbReference>
<dbReference type="PANTHER" id="PTHR43311:SF2">
    <property type="entry name" value="GLUTAMATE--TRNA LIGASE, MITOCHONDRIAL-RELATED"/>
    <property type="match status" value="1"/>
</dbReference>
<dbReference type="Pfam" id="PF19269">
    <property type="entry name" value="Anticodon_2"/>
    <property type="match status" value="1"/>
</dbReference>
<dbReference type="Pfam" id="PF00749">
    <property type="entry name" value="tRNA-synt_1c"/>
    <property type="match status" value="1"/>
</dbReference>
<dbReference type="PRINTS" id="PR00987">
    <property type="entry name" value="TRNASYNTHGLU"/>
</dbReference>
<dbReference type="SUPFAM" id="SSF48163">
    <property type="entry name" value="An anticodon-binding domain of class I aminoacyl-tRNA synthetases"/>
    <property type="match status" value="1"/>
</dbReference>
<dbReference type="SUPFAM" id="SSF52374">
    <property type="entry name" value="Nucleotidylyl transferase"/>
    <property type="match status" value="1"/>
</dbReference>
<dbReference type="PROSITE" id="PS00178">
    <property type="entry name" value="AA_TRNA_LIGASE_I"/>
    <property type="match status" value="1"/>
</dbReference>
<gene>
    <name evidence="1" type="primary">gltX</name>
    <name type="ordered locus">RHE_CH03656</name>
</gene>
<name>SYE_RHIEC</name>
<comment type="function">
    <text evidence="1">Catalyzes the attachment of glutamate to tRNA(Glu) in a two-step reaction: glutamate is first activated by ATP to form Glu-AMP and then transferred to the acceptor end of tRNA(Glu).</text>
</comment>
<comment type="catalytic activity">
    <reaction evidence="1">
        <text>tRNA(Glu) + L-glutamate + ATP = L-glutamyl-tRNA(Glu) + AMP + diphosphate</text>
        <dbReference type="Rhea" id="RHEA:23540"/>
        <dbReference type="Rhea" id="RHEA-COMP:9663"/>
        <dbReference type="Rhea" id="RHEA-COMP:9680"/>
        <dbReference type="ChEBI" id="CHEBI:29985"/>
        <dbReference type="ChEBI" id="CHEBI:30616"/>
        <dbReference type="ChEBI" id="CHEBI:33019"/>
        <dbReference type="ChEBI" id="CHEBI:78442"/>
        <dbReference type="ChEBI" id="CHEBI:78520"/>
        <dbReference type="ChEBI" id="CHEBI:456215"/>
        <dbReference type="EC" id="6.1.1.17"/>
    </reaction>
</comment>
<comment type="subunit">
    <text evidence="1">Monomer.</text>
</comment>
<comment type="subcellular location">
    <subcellularLocation>
        <location evidence="1">Cytoplasm</location>
    </subcellularLocation>
</comment>
<comment type="similarity">
    <text evidence="1">Belongs to the class-I aminoacyl-tRNA synthetase family. Glutamate--tRNA ligase type 1 subfamily.</text>
</comment>
<protein>
    <recommendedName>
        <fullName evidence="1">Glutamate--tRNA ligase</fullName>
        <ecNumber evidence="1">6.1.1.17</ecNumber>
    </recommendedName>
    <alternativeName>
        <fullName evidence="1">Glutamyl-tRNA synthetase</fullName>
        <shortName evidence="1">GluRS</shortName>
    </alternativeName>
</protein>
<reference key="1">
    <citation type="journal article" date="2006" name="Proc. Natl. Acad. Sci. U.S.A.">
        <title>The partitioned Rhizobium etli genome: genetic and metabolic redundancy in seven interacting replicons.</title>
        <authorList>
            <person name="Gonzalez V."/>
            <person name="Santamaria R.I."/>
            <person name="Bustos P."/>
            <person name="Hernandez-Gonzalez I."/>
            <person name="Medrano-Soto A."/>
            <person name="Moreno-Hagelsieb G."/>
            <person name="Janga S.C."/>
            <person name="Ramirez M.A."/>
            <person name="Jimenez-Jacinto V."/>
            <person name="Collado-Vides J."/>
            <person name="Davila G."/>
        </authorList>
    </citation>
    <scope>NUCLEOTIDE SEQUENCE [LARGE SCALE GENOMIC DNA]</scope>
    <source>
        <strain>ATCC 51251 / DSM 11541 / JCM 21823 / NBRC 15573 / CFN 42</strain>
    </source>
</reference>
<feature type="chain" id="PRO_0000237394" description="Glutamate--tRNA ligase">
    <location>
        <begin position="1"/>
        <end position="488"/>
    </location>
</feature>
<feature type="short sequence motif" description="'HIGH' region" evidence="1">
    <location>
        <begin position="16"/>
        <end position="26"/>
    </location>
</feature>
<feature type="short sequence motif" description="'KMSKS' region" evidence="1">
    <location>
        <begin position="257"/>
        <end position="261"/>
    </location>
</feature>
<feature type="binding site" evidence="1">
    <location>
        <position position="260"/>
    </location>
    <ligand>
        <name>ATP</name>
        <dbReference type="ChEBI" id="CHEBI:30616"/>
    </ligand>
</feature>
<organism>
    <name type="scientific">Rhizobium etli (strain ATCC 51251 / DSM 11541 / JCM 21823 / NBRC 15573 / CFN 42)</name>
    <dbReference type="NCBI Taxonomy" id="347834"/>
    <lineage>
        <taxon>Bacteria</taxon>
        <taxon>Pseudomonadati</taxon>
        <taxon>Pseudomonadota</taxon>
        <taxon>Alphaproteobacteria</taxon>
        <taxon>Hyphomicrobiales</taxon>
        <taxon>Rhizobiaceae</taxon>
        <taxon>Rhizobium/Agrobacterium group</taxon>
        <taxon>Rhizobium</taxon>
    </lineage>
</organism>